<protein>
    <recommendedName>
        <fullName>Gamma-conotoxin-like TxMEKL-0511</fullName>
    </recommendedName>
    <alternativeName>
        <fullName>Conotoxin TxMEKL-0512</fullName>
    </alternativeName>
</protein>
<evidence type="ECO:0000250" key="1"/>
<evidence type="ECO:0000255" key="2"/>
<evidence type="ECO:0000305" key="3"/>
<accession>Q9BHA0</accession>
<reference key="1">
    <citation type="journal article" date="2001" name="Mol. Biol. Evol.">
        <title>Mechanisms for evolving hypervariability: the case of conopeptides.</title>
        <authorList>
            <person name="Conticello S.G."/>
            <person name="Gilad Y."/>
            <person name="Avidan N."/>
            <person name="Ben-Asher E."/>
            <person name="Levy Z."/>
            <person name="Fainzilber M."/>
        </authorList>
    </citation>
    <scope>NUCLEOTIDE SEQUENCE [MRNA]</scope>
    <source>
        <tissue>Venom duct</tissue>
    </source>
</reference>
<dbReference type="EMBL" id="AF215025">
    <property type="protein sequence ID" value="AAG60453.1"/>
    <property type="molecule type" value="mRNA"/>
</dbReference>
<dbReference type="EMBL" id="AF215105">
    <property type="protein sequence ID" value="AAG60526.1"/>
    <property type="molecule type" value="mRNA"/>
</dbReference>
<dbReference type="ConoServer" id="712">
    <property type="toxin name" value="TxMEKL-0511/TxMEKL-0512 precursor"/>
</dbReference>
<dbReference type="GO" id="GO:0005576">
    <property type="term" value="C:extracellular region"/>
    <property type="evidence" value="ECO:0007669"/>
    <property type="project" value="UniProtKB-SubCell"/>
</dbReference>
<dbReference type="GO" id="GO:0008200">
    <property type="term" value="F:ion channel inhibitor activity"/>
    <property type="evidence" value="ECO:0007669"/>
    <property type="project" value="InterPro"/>
</dbReference>
<dbReference type="GO" id="GO:0090729">
    <property type="term" value="F:toxin activity"/>
    <property type="evidence" value="ECO:0007669"/>
    <property type="project" value="UniProtKB-KW"/>
</dbReference>
<dbReference type="InterPro" id="IPR004214">
    <property type="entry name" value="Conotoxin"/>
</dbReference>
<dbReference type="Pfam" id="PF02950">
    <property type="entry name" value="Conotoxin"/>
    <property type="match status" value="1"/>
</dbReference>
<sequence length="81" mass="9350">MEKLTILLLVAAVLLSIQALNQEKHQRAKINLLSKRKPPAERWWRWGGCMAWFGLCSKDSECCSNSCDVTRCELMPFPPDW</sequence>
<comment type="function">
    <text evidence="1">Gamma-conotoxins may act on voltage-gated non-specific cation pacemaker channels (HCN).</text>
</comment>
<comment type="subcellular location">
    <subcellularLocation>
        <location evidence="1">Secreted</location>
    </subcellularLocation>
</comment>
<comment type="tissue specificity">
    <text>Expressed by the venom duct.</text>
</comment>
<comment type="domain">
    <text evidence="1">The presence of a 'disulfide through disulfide knot' structurally defines this protein as a knottin.</text>
</comment>
<comment type="domain">
    <text>The cysteine framework is VI/VII (C-C-CC-C-C).</text>
</comment>
<comment type="similarity">
    <text evidence="3">Belongs to the conotoxin O2 superfamily.</text>
</comment>
<feature type="signal peptide" evidence="2">
    <location>
        <begin position="1"/>
        <end position="19"/>
    </location>
</feature>
<feature type="propeptide" id="PRO_0000404800" evidence="1">
    <location>
        <begin position="20"/>
        <end position="45"/>
    </location>
</feature>
<feature type="peptide" id="PRO_0000404801" description="Gamma-conotoxin-like TxMEKL-0511">
    <location>
        <begin position="46"/>
        <end position="81"/>
    </location>
</feature>
<feature type="disulfide bond" evidence="1">
    <location>
        <begin position="49"/>
        <end position="63"/>
    </location>
</feature>
<feature type="disulfide bond" evidence="1">
    <location>
        <begin position="56"/>
        <end position="67"/>
    </location>
</feature>
<feature type="disulfide bond" evidence="1">
    <location>
        <begin position="62"/>
        <end position="72"/>
    </location>
</feature>
<organism>
    <name type="scientific">Conus textile</name>
    <name type="common">Cloth-of-gold cone</name>
    <dbReference type="NCBI Taxonomy" id="6494"/>
    <lineage>
        <taxon>Eukaryota</taxon>
        <taxon>Metazoa</taxon>
        <taxon>Spiralia</taxon>
        <taxon>Lophotrochozoa</taxon>
        <taxon>Mollusca</taxon>
        <taxon>Gastropoda</taxon>
        <taxon>Caenogastropoda</taxon>
        <taxon>Neogastropoda</taxon>
        <taxon>Conoidea</taxon>
        <taxon>Conidae</taxon>
        <taxon>Conus</taxon>
        <taxon>Cylinder</taxon>
    </lineage>
</organism>
<name>O26M_CONTE</name>
<keyword id="KW-1015">Disulfide bond</keyword>
<keyword id="KW-0872">Ion channel impairing toxin</keyword>
<keyword id="KW-0960">Knottin</keyword>
<keyword id="KW-0528">Neurotoxin</keyword>
<keyword id="KW-0964">Secreted</keyword>
<keyword id="KW-0732">Signal</keyword>
<keyword id="KW-0800">Toxin</keyword>
<proteinExistence type="evidence at transcript level"/>